<name>AMPA_RHIME</name>
<accession>Q92QY7</accession>
<protein>
    <recommendedName>
        <fullName evidence="1">Probable cytosol aminopeptidase</fullName>
        <ecNumber evidence="1">3.4.11.1</ecNumber>
    </recommendedName>
    <alternativeName>
        <fullName evidence="1">Leucine aminopeptidase</fullName>
        <shortName evidence="1">LAP</shortName>
        <ecNumber evidence="1">3.4.11.10</ecNumber>
    </alternativeName>
    <alternativeName>
        <fullName evidence="1">Leucyl aminopeptidase</fullName>
    </alternativeName>
</protein>
<comment type="function">
    <text evidence="1">Presumably involved in the processing and regular turnover of intracellular proteins. Catalyzes the removal of unsubstituted N-terminal amino acids from various peptides.</text>
</comment>
<comment type="catalytic activity">
    <reaction evidence="1">
        <text>Release of an N-terminal amino acid, Xaa-|-Yaa-, in which Xaa is preferably Leu, but may be other amino acids including Pro although not Arg or Lys, and Yaa may be Pro. Amino acid amides and methyl esters are also readily hydrolyzed, but rates on arylamides are exceedingly low.</text>
        <dbReference type="EC" id="3.4.11.1"/>
    </reaction>
</comment>
<comment type="catalytic activity">
    <reaction evidence="1">
        <text>Release of an N-terminal amino acid, preferentially leucine, but not glutamic or aspartic acids.</text>
        <dbReference type="EC" id="3.4.11.10"/>
    </reaction>
</comment>
<comment type="cofactor">
    <cofactor evidence="1">
        <name>Mn(2+)</name>
        <dbReference type="ChEBI" id="CHEBI:29035"/>
    </cofactor>
    <text evidence="1">Binds 2 manganese ions per subunit.</text>
</comment>
<comment type="subcellular location">
    <subcellularLocation>
        <location evidence="1">Cytoplasm</location>
    </subcellularLocation>
</comment>
<comment type="similarity">
    <text evidence="1">Belongs to the peptidase M17 family.</text>
</comment>
<organism>
    <name type="scientific">Rhizobium meliloti (strain 1021)</name>
    <name type="common">Ensifer meliloti</name>
    <name type="synonym">Sinorhizobium meliloti</name>
    <dbReference type="NCBI Taxonomy" id="266834"/>
    <lineage>
        <taxon>Bacteria</taxon>
        <taxon>Pseudomonadati</taxon>
        <taxon>Pseudomonadota</taxon>
        <taxon>Alphaproteobacteria</taxon>
        <taxon>Hyphomicrobiales</taxon>
        <taxon>Rhizobiaceae</taxon>
        <taxon>Sinorhizobium/Ensifer group</taxon>
        <taxon>Sinorhizobium</taxon>
    </lineage>
</organism>
<evidence type="ECO:0000255" key="1">
    <source>
        <dbReference type="HAMAP-Rule" id="MF_00181"/>
    </source>
</evidence>
<proteinExistence type="inferred from homology"/>
<gene>
    <name evidence="1" type="primary">pepA</name>
    <name type="ordered locus">R01155</name>
    <name type="ORF">SMc00585</name>
</gene>
<feature type="chain" id="PRO_0000165788" description="Probable cytosol aminopeptidase">
    <location>
        <begin position="1"/>
        <end position="497"/>
    </location>
</feature>
<feature type="active site" evidence="1">
    <location>
        <position position="275"/>
    </location>
</feature>
<feature type="active site" evidence="1">
    <location>
        <position position="349"/>
    </location>
</feature>
<feature type="binding site" evidence="1">
    <location>
        <position position="263"/>
    </location>
    <ligand>
        <name>Mn(2+)</name>
        <dbReference type="ChEBI" id="CHEBI:29035"/>
        <label>2</label>
    </ligand>
</feature>
<feature type="binding site" evidence="1">
    <location>
        <position position="268"/>
    </location>
    <ligand>
        <name>Mn(2+)</name>
        <dbReference type="ChEBI" id="CHEBI:29035"/>
        <label>1</label>
    </ligand>
</feature>
<feature type="binding site" evidence="1">
    <location>
        <position position="268"/>
    </location>
    <ligand>
        <name>Mn(2+)</name>
        <dbReference type="ChEBI" id="CHEBI:29035"/>
        <label>2</label>
    </ligand>
</feature>
<feature type="binding site" evidence="1">
    <location>
        <position position="286"/>
    </location>
    <ligand>
        <name>Mn(2+)</name>
        <dbReference type="ChEBI" id="CHEBI:29035"/>
        <label>2</label>
    </ligand>
</feature>
<feature type="binding site" evidence="1">
    <location>
        <position position="345"/>
    </location>
    <ligand>
        <name>Mn(2+)</name>
        <dbReference type="ChEBI" id="CHEBI:29035"/>
        <label>1</label>
    </ligand>
</feature>
<feature type="binding site" evidence="1">
    <location>
        <position position="347"/>
    </location>
    <ligand>
        <name>Mn(2+)</name>
        <dbReference type="ChEBI" id="CHEBI:29035"/>
        <label>1</label>
    </ligand>
</feature>
<feature type="binding site" evidence="1">
    <location>
        <position position="347"/>
    </location>
    <ligand>
        <name>Mn(2+)</name>
        <dbReference type="ChEBI" id="CHEBI:29035"/>
        <label>2</label>
    </ligand>
</feature>
<dbReference type="EC" id="3.4.11.1" evidence="1"/>
<dbReference type="EC" id="3.4.11.10" evidence="1"/>
<dbReference type="EMBL" id="AL591688">
    <property type="protein sequence ID" value="CAC45734.1"/>
    <property type="molecule type" value="Genomic_DNA"/>
</dbReference>
<dbReference type="RefSeq" id="NP_385261.1">
    <property type="nucleotide sequence ID" value="NC_003047.1"/>
</dbReference>
<dbReference type="RefSeq" id="WP_003531642.1">
    <property type="nucleotide sequence ID" value="NC_003047.1"/>
</dbReference>
<dbReference type="SMR" id="Q92QY7"/>
<dbReference type="EnsemblBacteria" id="CAC45734">
    <property type="protein sequence ID" value="CAC45734"/>
    <property type="gene ID" value="SMc00585"/>
</dbReference>
<dbReference type="KEGG" id="sme:SMc00585"/>
<dbReference type="PATRIC" id="fig|266834.11.peg.2564"/>
<dbReference type="eggNOG" id="COG0260">
    <property type="taxonomic scope" value="Bacteria"/>
</dbReference>
<dbReference type="HOGENOM" id="CLU_013734_6_0_5"/>
<dbReference type="OrthoDB" id="9809354at2"/>
<dbReference type="Proteomes" id="UP000001976">
    <property type="component" value="Chromosome"/>
</dbReference>
<dbReference type="GO" id="GO:0005737">
    <property type="term" value="C:cytoplasm"/>
    <property type="evidence" value="ECO:0007669"/>
    <property type="project" value="UniProtKB-SubCell"/>
</dbReference>
<dbReference type="GO" id="GO:0030145">
    <property type="term" value="F:manganese ion binding"/>
    <property type="evidence" value="ECO:0007669"/>
    <property type="project" value="UniProtKB-UniRule"/>
</dbReference>
<dbReference type="GO" id="GO:0070006">
    <property type="term" value="F:metalloaminopeptidase activity"/>
    <property type="evidence" value="ECO:0007669"/>
    <property type="project" value="InterPro"/>
</dbReference>
<dbReference type="GO" id="GO:0006508">
    <property type="term" value="P:proteolysis"/>
    <property type="evidence" value="ECO:0007669"/>
    <property type="project" value="UniProtKB-KW"/>
</dbReference>
<dbReference type="CDD" id="cd00433">
    <property type="entry name" value="Peptidase_M17"/>
    <property type="match status" value="1"/>
</dbReference>
<dbReference type="Gene3D" id="3.40.220.10">
    <property type="entry name" value="Leucine Aminopeptidase, subunit E, domain 1"/>
    <property type="match status" value="1"/>
</dbReference>
<dbReference type="Gene3D" id="3.40.630.10">
    <property type="entry name" value="Zn peptidases"/>
    <property type="match status" value="1"/>
</dbReference>
<dbReference type="HAMAP" id="MF_00181">
    <property type="entry name" value="Cytosol_peptidase_M17"/>
    <property type="match status" value="1"/>
</dbReference>
<dbReference type="InterPro" id="IPR011356">
    <property type="entry name" value="Leucine_aapep/pepB"/>
</dbReference>
<dbReference type="InterPro" id="IPR043472">
    <property type="entry name" value="Macro_dom-like"/>
</dbReference>
<dbReference type="InterPro" id="IPR000819">
    <property type="entry name" value="Peptidase_M17_C"/>
</dbReference>
<dbReference type="InterPro" id="IPR023042">
    <property type="entry name" value="Peptidase_M17_leu_NH2_pept"/>
</dbReference>
<dbReference type="InterPro" id="IPR008283">
    <property type="entry name" value="Peptidase_M17_N"/>
</dbReference>
<dbReference type="NCBIfam" id="NF002073">
    <property type="entry name" value="PRK00913.1-2"/>
    <property type="match status" value="1"/>
</dbReference>
<dbReference type="NCBIfam" id="NF002074">
    <property type="entry name" value="PRK00913.1-4"/>
    <property type="match status" value="1"/>
</dbReference>
<dbReference type="NCBIfam" id="NF002075">
    <property type="entry name" value="PRK00913.2-2"/>
    <property type="match status" value="1"/>
</dbReference>
<dbReference type="NCBIfam" id="NF002077">
    <property type="entry name" value="PRK00913.2-4"/>
    <property type="match status" value="1"/>
</dbReference>
<dbReference type="NCBIfam" id="NF002083">
    <property type="entry name" value="PRK00913.3-5"/>
    <property type="match status" value="1"/>
</dbReference>
<dbReference type="PANTHER" id="PTHR11963:SF23">
    <property type="entry name" value="CYTOSOL AMINOPEPTIDASE"/>
    <property type="match status" value="1"/>
</dbReference>
<dbReference type="PANTHER" id="PTHR11963">
    <property type="entry name" value="LEUCINE AMINOPEPTIDASE-RELATED"/>
    <property type="match status" value="1"/>
</dbReference>
<dbReference type="Pfam" id="PF00883">
    <property type="entry name" value="Peptidase_M17"/>
    <property type="match status" value="1"/>
</dbReference>
<dbReference type="Pfam" id="PF02789">
    <property type="entry name" value="Peptidase_M17_N"/>
    <property type="match status" value="1"/>
</dbReference>
<dbReference type="PRINTS" id="PR00481">
    <property type="entry name" value="LAMNOPPTDASE"/>
</dbReference>
<dbReference type="SUPFAM" id="SSF52949">
    <property type="entry name" value="Macro domain-like"/>
    <property type="match status" value="1"/>
</dbReference>
<dbReference type="SUPFAM" id="SSF53187">
    <property type="entry name" value="Zn-dependent exopeptidases"/>
    <property type="match status" value="1"/>
</dbReference>
<dbReference type="PROSITE" id="PS00631">
    <property type="entry name" value="CYTOSOL_AP"/>
    <property type="match status" value="1"/>
</dbReference>
<keyword id="KW-0031">Aminopeptidase</keyword>
<keyword id="KW-0963">Cytoplasm</keyword>
<keyword id="KW-0378">Hydrolase</keyword>
<keyword id="KW-0464">Manganese</keyword>
<keyword id="KW-0479">Metal-binding</keyword>
<keyword id="KW-0645">Protease</keyword>
<keyword id="KW-1185">Reference proteome</keyword>
<sequence length="497" mass="52221">MPMKFEFSFSKSHRPAGGAAVLLQVAGAKEAAGAAVVDPEGVLAKAAKIGKFTGKALSTLDVIAPHGSPADRIVLLGLGDAGGVGDHDWLKAGGAAAAKLRSAEKITVFLDAPGLEVTGKAAADFALGMEMNAYGFESYKTRKSDDEPKAAQKPVKVTIVTGTVIAAKKAFMTAQAVGEGVFLARDLVNEPANVLGPVEFAARAKELERLGVDVEILTEREMKKLGMGALLGVAQGSSRPPRLVVMQWKGGKAKEKPVAFIGKGVVFDTGGISIKPASGMEEMKGDMGGAAAVTGLMHVLAARKAAVNAIGIIGLVENMPDGSAQRPGDIVTSMSGQTIEVINTDAEGRLVLGDALWYCNDRFKPQLMIDLATLTGAIMVALSNHYAGLFSNDDRLAEQLLAAGLATQERLWRMPLGKEYDKMIDSKFADMKNTGGRHGGSVTAAQFLKRFVKDTPWAHLDIAGTAMGSPTDEINQSWGSGFGVRLLDQLVRANYES</sequence>
<reference key="1">
    <citation type="journal article" date="2001" name="Proc. Natl. Acad. Sci. U.S.A.">
        <title>Analysis of the chromosome sequence of the legume symbiont Sinorhizobium meliloti strain 1021.</title>
        <authorList>
            <person name="Capela D."/>
            <person name="Barloy-Hubler F."/>
            <person name="Gouzy J."/>
            <person name="Bothe G."/>
            <person name="Ampe F."/>
            <person name="Batut J."/>
            <person name="Boistard P."/>
            <person name="Becker A."/>
            <person name="Boutry M."/>
            <person name="Cadieu E."/>
            <person name="Dreano S."/>
            <person name="Gloux S."/>
            <person name="Godrie T."/>
            <person name="Goffeau A."/>
            <person name="Kahn D."/>
            <person name="Kiss E."/>
            <person name="Lelaure V."/>
            <person name="Masuy D."/>
            <person name="Pohl T."/>
            <person name="Portetelle D."/>
            <person name="Puehler A."/>
            <person name="Purnelle B."/>
            <person name="Ramsperger U."/>
            <person name="Renard C."/>
            <person name="Thebault P."/>
            <person name="Vandenbol M."/>
            <person name="Weidner S."/>
            <person name="Galibert F."/>
        </authorList>
    </citation>
    <scope>NUCLEOTIDE SEQUENCE [LARGE SCALE GENOMIC DNA]</scope>
    <source>
        <strain>1021</strain>
    </source>
</reference>
<reference key="2">
    <citation type="journal article" date="2001" name="Science">
        <title>The composite genome of the legume symbiont Sinorhizobium meliloti.</title>
        <authorList>
            <person name="Galibert F."/>
            <person name="Finan T.M."/>
            <person name="Long S.R."/>
            <person name="Puehler A."/>
            <person name="Abola P."/>
            <person name="Ampe F."/>
            <person name="Barloy-Hubler F."/>
            <person name="Barnett M.J."/>
            <person name="Becker A."/>
            <person name="Boistard P."/>
            <person name="Bothe G."/>
            <person name="Boutry M."/>
            <person name="Bowser L."/>
            <person name="Buhrmester J."/>
            <person name="Cadieu E."/>
            <person name="Capela D."/>
            <person name="Chain P."/>
            <person name="Cowie A."/>
            <person name="Davis R.W."/>
            <person name="Dreano S."/>
            <person name="Federspiel N.A."/>
            <person name="Fisher R.F."/>
            <person name="Gloux S."/>
            <person name="Godrie T."/>
            <person name="Goffeau A."/>
            <person name="Golding B."/>
            <person name="Gouzy J."/>
            <person name="Gurjal M."/>
            <person name="Hernandez-Lucas I."/>
            <person name="Hong A."/>
            <person name="Huizar L."/>
            <person name="Hyman R.W."/>
            <person name="Jones T."/>
            <person name="Kahn D."/>
            <person name="Kahn M.L."/>
            <person name="Kalman S."/>
            <person name="Keating D.H."/>
            <person name="Kiss E."/>
            <person name="Komp C."/>
            <person name="Lelaure V."/>
            <person name="Masuy D."/>
            <person name="Palm C."/>
            <person name="Peck M.C."/>
            <person name="Pohl T.M."/>
            <person name="Portetelle D."/>
            <person name="Purnelle B."/>
            <person name="Ramsperger U."/>
            <person name="Surzycki R."/>
            <person name="Thebault P."/>
            <person name="Vandenbol M."/>
            <person name="Vorhoelter F.J."/>
            <person name="Weidner S."/>
            <person name="Wells D.H."/>
            <person name="Wong K."/>
            <person name="Yeh K.-C."/>
            <person name="Batut J."/>
        </authorList>
    </citation>
    <scope>NUCLEOTIDE SEQUENCE [LARGE SCALE GENOMIC DNA]</scope>
    <source>
        <strain>1021</strain>
    </source>
</reference>